<sequence length="446" mass="50366">MKAAVEKLDKNQVLLEVEVEAPRVQKAIDQAYRRLVKQVNIPGFRKGKAPRFILEQYIGKEPIYNEAAEIVIPPAYEEAVAEHQLEPIDRPEVEIVKVEDGEPLVFKARVEVKPEVQLGPYTGLEVERQEVEVTEADIDAYLKRLQERYAELEVIEDEPAAAGDIVTIDFKGTVDGQPYPGMEGNNYPLELGSGTFITGFEEQLVGARVNEERTVNVTFPSDYHEKDLAGKEAVFQVTVRGIKRKKLAPLDDEFAKDVSECETLADLRQDIRRRLEESQKQRVEAAVRQAVVEKAVAAATVELPEVMVERRIDARIRELERNLQAQKMTLEEFLKNTDKTIGDLEKEFRPGAERDVKTELVLEAIAKAENIQPSQEEIDAEIERMARIFRQDPDTVRKNLGDLSVLKYDIMIKKTIDFLVEHSKPVPPREQGAAGETAETAEATPA</sequence>
<evidence type="ECO:0000255" key="1">
    <source>
        <dbReference type="HAMAP-Rule" id="MF_00303"/>
    </source>
</evidence>
<evidence type="ECO:0000256" key="2">
    <source>
        <dbReference type="SAM" id="MobiDB-lite"/>
    </source>
</evidence>
<organism>
    <name type="scientific">Moorella thermoacetica (strain ATCC 39073 / JCM 9320)</name>
    <dbReference type="NCBI Taxonomy" id="264732"/>
    <lineage>
        <taxon>Bacteria</taxon>
        <taxon>Bacillati</taxon>
        <taxon>Bacillota</taxon>
        <taxon>Clostridia</taxon>
        <taxon>Moorellales</taxon>
        <taxon>Moorellaceae</taxon>
        <taxon>Moorella</taxon>
    </lineage>
</organism>
<name>TIG_MOOTA</name>
<comment type="function">
    <text evidence="1">Involved in protein export. Acts as a chaperone by maintaining the newly synthesized protein in an open conformation. Functions as a peptidyl-prolyl cis-trans isomerase.</text>
</comment>
<comment type="catalytic activity">
    <reaction evidence="1">
        <text>[protein]-peptidylproline (omega=180) = [protein]-peptidylproline (omega=0)</text>
        <dbReference type="Rhea" id="RHEA:16237"/>
        <dbReference type="Rhea" id="RHEA-COMP:10747"/>
        <dbReference type="Rhea" id="RHEA-COMP:10748"/>
        <dbReference type="ChEBI" id="CHEBI:83833"/>
        <dbReference type="ChEBI" id="CHEBI:83834"/>
        <dbReference type="EC" id="5.2.1.8"/>
    </reaction>
</comment>
<comment type="subcellular location">
    <subcellularLocation>
        <location>Cytoplasm</location>
    </subcellularLocation>
    <text evidence="1">About half TF is bound to the ribosome near the polypeptide exit tunnel while the other half is free in the cytoplasm.</text>
</comment>
<comment type="domain">
    <text evidence="1">Consists of 3 domains; the N-terminus binds the ribosome, the middle domain has PPIase activity, while the C-terminus has intrinsic chaperone activity on its own.</text>
</comment>
<comment type="similarity">
    <text evidence="1">Belongs to the FKBP-type PPIase family. Tig subfamily.</text>
</comment>
<accession>Q2RL32</accession>
<reference key="1">
    <citation type="journal article" date="2008" name="Environ. Microbiol.">
        <title>The complete genome sequence of Moorella thermoacetica (f. Clostridium thermoaceticum).</title>
        <authorList>
            <person name="Pierce E."/>
            <person name="Xie G."/>
            <person name="Barabote R.D."/>
            <person name="Saunders E."/>
            <person name="Han C.S."/>
            <person name="Detter J.C."/>
            <person name="Richardson P."/>
            <person name="Brettin T.S."/>
            <person name="Das A."/>
            <person name="Ljungdahl L.G."/>
            <person name="Ragsdale S.W."/>
        </authorList>
    </citation>
    <scope>NUCLEOTIDE SEQUENCE [LARGE SCALE GENOMIC DNA]</scope>
    <source>
        <strain>ATCC 39073 / JCM 9320</strain>
    </source>
</reference>
<gene>
    <name evidence="1" type="primary">tig</name>
    <name type="ordered locus">Moth_0527</name>
</gene>
<proteinExistence type="inferred from homology"/>
<dbReference type="EC" id="5.2.1.8" evidence="1"/>
<dbReference type="EMBL" id="CP000232">
    <property type="protein sequence ID" value="ABC18857.1"/>
    <property type="molecule type" value="Genomic_DNA"/>
</dbReference>
<dbReference type="RefSeq" id="YP_429400.1">
    <property type="nucleotide sequence ID" value="NC_007644.1"/>
</dbReference>
<dbReference type="SMR" id="Q2RL32"/>
<dbReference type="STRING" id="264732.Moth_0527"/>
<dbReference type="EnsemblBacteria" id="ABC18857">
    <property type="protein sequence ID" value="ABC18857"/>
    <property type="gene ID" value="Moth_0527"/>
</dbReference>
<dbReference type="KEGG" id="mta:Moth_0527"/>
<dbReference type="PATRIC" id="fig|264732.11.peg.569"/>
<dbReference type="eggNOG" id="COG0544">
    <property type="taxonomic scope" value="Bacteria"/>
</dbReference>
<dbReference type="HOGENOM" id="CLU_033058_3_2_9"/>
<dbReference type="OrthoDB" id="9767721at2"/>
<dbReference type="GO" id="GO:0005737">
    <property type="term" value="C:cytoplasm"/>
    <property type="evidence" value="ECO:0007669"/>
    <property type="project" value="UniProtKB-SubCell"/>
</dbReference>
<dbReference type="GO" id="GO:0003755">
    <property type="term" value="F:peptidyl-prolyl cis-trans isomerase activity"/>
    <property type="evidence" value="ECO:0007669"/>
    <property type="project" value="UniProtKB-UniRule"/>
</dbReference>
<dbReference type="GO" id="GO:0044183">
    <property type="term" value="F:protein folding chaperone"/>
    <property type="evidence" value="ECO:0007669"/>
    <property type="project" value="TreeGrafter"/>
</dbReference>
<dbReference type="GO" id="GO:0043022">
    <property type="term" value="F:ribosome binding"/>
    <property type="evidence" value="ECO:0007669"/>
    <property type="project" value="TreeGrafter"/>
</dbReference>
<dbReference type="GO" id="GO:0051083">
    <property type="term" value="P:'de novo' cotranslational protein folding"/>
    <property type="evidence" value="ECO:0007669"/>
    <property type="project" value="TreeGrafter"/>
</dbReference>
<dbReference type="GO" id="GO:0051301">
    <property type="term" value="P:cell division"/>
    <property type="evidence" value="ECO:0007669"/>
    <property type="project" value="UniProtKB-KW"/>
</dbReference>
<dbReference type="GO" id="GO:0061077">
    <property type="term" value="P:chaperone-mediated protein folding"/>
    <property type="evidence" value="ECO:0007669"/>
    <property type="project" value="TreeGrafter"/>
</dbReference>
<dbReference type="GO" id="GO:0015031">
    <property type="term" value="P:protein transport"/>
    <property type="evidence" value="ECO:0007669"/>
    <property type="project" value="UniProtKB-UniRule"/>
</dbReference>
<dbReference type="GO" id="GO:0043335">
    <property type="term" value="P:protein unfolding"/>
    <property type="evidence" value="ECO:0007669"/>
    <property type="project" value="TreeGrafter"/>
</dbReference>
<dbReference type="FunFam" id="3.10.50.40:FF:000001">
    <property type="entry name" value="Trigger factor"/>
    <property type="match status" value="1"/>
</dbReference>
<dbReference type="Gene3D" id="3.10.50.40">
    <property type="match status" value="1"/>
</dbReference>
<dbReference type="Gene3D" id="3.30.70.1050">
    <property type="entry name" value="Trigger factor ribosome-binding domain"/>
    <property type="match status" value="1"/>
</dbReference>
<dbReference type="Gene3D" id="1.10.3120.10">
    <property type="entry name" value="Trigger factor, C-terminal domain"/>
    <property type="match status" value="1"/>
</dbReference>
<dbReference type="HAMAP" id="MF_00303">
    <property type="entry name" value="Trigger_factor_Tig"/>
    <property type="match status" value="1"/>
</dbReference>
<dbReference type="InterPro" id="IPR046357">
    <property type="entry name" value="PPIase_dom_sf"/>
</dbReference>
<dbReference type="InterPro" id="IPR001179">
    <property type="entry name" value="PPIase_FKBP_dom"/>
</dbReference>
<dbReference type="InterPro" id="IPR005215">
    <property type="entry name" value="Trig_fac"/>
</dbReference>
<dbReference type="InterPro" id="IPR008880">
    <property type="entry name" value="Trigger_fac_C"/>
</dbReference>
<dbReference type="InterPro" id="IPR037041">
    <property type="entry name" value="Trigger_fac_C_sf"/>
</dbReference>
<dbReference type="InterPro" id="IPR008881">
    <property type="entry name" value="Trigger_fac_ribosome-bd_bac"/>
</dbReference>
<dbReference type="InterPro" id="IPR036611">
    <property type="entry name" value="Trigger_fac_ribosome-bd_sf"/>
</dbReference>
<dbReference type="InterPro" id="IPR027304">
    <property type="entry name" value="Trigger_fact/SurA_dom_sf"/>
</dbReference>
<dbReference type="NCBIfam" id="TIGR00115">
    <property type="entry name" value="tig"/>
    <property type="match status" value="1"/>
</dbReference>
<dbReference type="PANTHER" id="PTHR30560">
    <property type="entry name" value="TRIGGER FACTOR CHAPERONE AND PEPTIDYL-PROLYL CIS/TRANS ISOMERASE"/>
    <property type="match status" value="1"/>
</dbReference>
<dbReference type="PANTHER" id="PTHR30560:SF3">
    <property type="entry name" value="TRIGGER FACTOR-LIKE PROTEIN TIG, CHLOROPLASTIC"/>
    <property type="match status" value="1"/>
</dbReference>
<dbReference type="Pfam" id="PF00254">
    <property type="entry name" value="FKBP_C"/>
    <property type="match status" value="1"/>
</dbReference>
<dbReference type="Pfam" id="PF05698">
    <property type="entry name" value="Trigger_C"/>
    <property type="match status" value="1"/>
</dbReference>
<dbReference type="Pfam" id="PF05697">
    <property type="entry name" value="Trigger_N"/>
    <property type="match status" value="1"/>
</dbReference>
<dbReference type="PIRSF" id="PIRSF003095">
    <property type="entry name" value="Trigger_factor"/>
    <property type="match status" value="1"/>
</dbReference>
<dbReference type="SUPFAM" id="SSF54534">
    <property type="entry name" value="FKBP-like"/>
    <property type="match status" value="1"/>
</dbReference>
<dbReference type="SUPFAM" id="SSF109998">
    <property type="entry name" value="Triger factor/SurA peptide-binding domain-like"/>
    <property type="match status" value="1"/>
</dbReference>
<dbReference type="SUPFAM" id="SSF102735">
    <property type="entry name" value="Trigger factor ribosome-binding domain"/>
    <property type="match status" value="1"/>
</dbReference>
<dbReference type="PROSITE" id="PS50059">
    <property type="entry name" value="FKBP_PPIASE"/>
    <property type="match status" value="1"/>
</dbReference>
<keyword id="KW-0131">Cell cycle</keyword>
<keyword id="KW-0132">Cell division</keyword>
<keyword id="KW-0143">Chaperone</keyword>
<keyword id="KW-0963">Cytoplasm</keyword>
<keyword id="KW-0413">Isomerase</keyword>
<keyword id="KW-0697">Rotamase</keyword>
<protein>
    <recommendedName>
        <fullName evidence="1">Trigger factor</fullName>
        <shortName evidence="1">TF</shortName>
        <ecNumber evidence="1">5.2.1.8</ecNumber>
    </recommendedName>
    <alternativeName>
        <fullName evidence="1">PPIase</fullName>
    </alternativeName>
</protein>
<feature type="chain" id="PRO_0000256574" description="Trigger factor">
    <location>
        <begin position="1"/>
        <end position="446"/>
    </location>
</feature>
<feature type="domain" description="PPIase FKBP-type" evidence="1">
    <location>
        <begin position="163"/>
        <end position="248"/>
    </location>
</feature>
<feature type="region of interest" description="Disordered" evidence="2">
    <location>
        <begin position="423"/>
        <end position="446"/>
    </location>
</feature>
<feature type="compositionally biased region" description="Low complexity" evidence="2">
    <location>
        <begin position="432"/>
        <end position="446"/>
    </location>
</feature>